<reference key="1">
    <citation type="submission" date="2009-01" db="EMBL/GenBank/DDBJ databases">
        <title>Complete sequence of chromosome of Caldicellulosiruptor becscii DSM 6725.</title>
        <authorList>
            <person name="Lucas S."/>
            <person name="Copeland A."/>
            <person name="Lapidus A."/>
            <person name="Glavina del Rio T."/>
            <person name="Tice H."/>
            <person name="Bruce D."/>
            <person name="Goodwin L."/>
            <person name="Pitluck S."/>
            <person name="Sims D."/>
            <person name="Meincke L."/>
            <person name="Brettin T."/>
            <person name="Detter J.C."/>
            <person name="Han C."/>
            <person name="Larimer F."/>
            <person name="Land M."/>
            <person name="Hauser L."/>
            <person name="Kyrpides N."/>
            <person name="Ovchinnikova G."/>
            <person name="Kataeva I."/>
            <person name="Adams M.W.W."/>
        </authorList>
    </citation>
    <scope>NUCLEOTIDE SEQUENCE [LARGE SCALE GENOMIC DNA]</scope>
    <source>
        <strain>ATCC BAA-1888 / DSM 6725 / KCTC 15123 / Z-1320</strain>
    </source>
</reference>
<accession>B9MLV4</accession>
<gene>
    <name evidence="1" type="primary">leuC</name>
    <name type="ordered locus">Athe_2101</name>
</gene>
<dbReference type="EC" id="4.2.1.33" evidence="1"/>
<dbReference type="EMBL" id="CP001393">
    <property type="protein sequence ID" value="ACM61177.1"/>
    <property type="molecule type" value="Genomic_DNA"/>
</dbReference>
<dbReference type="RefSeq" id="WP_015908450.1">
    <property type="nucleotide sequence ID" value="NC_012034.1"/>
</dbReference>
<dbReference type="SMR" id="B9MLV4"/>
<dbReference type="STRING" id="521460.Athe_2101"/>
<dbReference type="GeneID" id="31773449"/>
<dbReference type="KEGG" id="ate:Athe_2101"/>
<dbReference type="eggNOG" id="COG0065">
    <property type="taxonomic scope" value="Bacteria"/>
</dbReference>
<dbReference type="HOGENOM" id="CLU_006714_3_4_9"/>
<dbReference type="UniPathway" id="UPA00048">
    <property type="reaction ID" value="UER00071"/>
</dbReference>
<dbReference type="Proteomes" id="UP000007723">
    <property type="component" value="Chromosome"/>
</dbReference>
<dbReference type="GO" id="GO:0003861">
    <property type="term" value="F:3-isopropylmalate dehydratase activity"/>
    <property type="evidence" value="ECO:0007669"/>
    <property type="project" value="UniProtKB-UniRule"/>
</dbReference>
<dbReference type="GO" id="GO:0051539">
    <property type="term" value="F:4 iron, 4 sulfur cluster binding"/>
    <property type="evidence" value="ECO:0007669"/>
    <property type="project" value="UniProtKB-KW"/>
</dbReference>
<dbReference type="GO" id="GO:0046872">
    <property type="term" value="F:metal ion binding"/>
    <property type="evidence" value="ECO:0007669"/>
    <property type="project" value="UniProtKB-KW"/>
</dbReference>
<dbReference type="GO" id="GO:0009098">
    <property type="term" value="P:L-leucine biosynthetic process"/>
    <property type="evidence" value="ECO:0007669"/>
    <property type="project" value="UniProtKB-UniRule"/>
</dbReference>
<dbReference type="CDD" id="cd01583">
    <property type="entry name" value="IPMI"/>
    <property type="match status" value="1"/>
</dbReference>
<dbReference type="Gene3D" id="3.30.499.10">
    <property type="entry name" value="Aconitase, domain 3"/>
    <property type="match status" value="2"/>
</dbReference>
<dbReference type="HAMAP" id="MF_01027">
    <property type="entry name" value="LeuC_type2"/>
    <property type="match status" value="1"/>
</dbReference>
<dbReference type="InterPro" id="IPR015931">
    <property type="entry name" value="Acnase/IPM_dHydase_lsu_aba_1/3"/>
</dbReference>
<dbReference type="InterPro" id="IPR001030">
    <property type="entry name" value="Acoase/IPM_deHydtase_lsu_aba"/>
</dbReference>
<dbReference type="InterPro" id="IPR018136">
    <property type="entry name" value="Aconitase_4Fe-4S_BS"/>
</dbReference>
<dbReference type="InterPro" id="IPR036008">
    <property type="entry name" value="Aconitase_4Fe-4S_dom"/>
</dbReference>
<dbReference type="InterPro" id="IPR011826">
    <property type="entry name" value="HAcnase/IPMdehydase_lsu_prok"/>
</dbReference>
<dbReference type="InterPro" id="IPR006251">
    <property type="entry name" value="Homoacnase/IPMdehydase_lsu"/>
</dbReference>
<dbReference type="InterPro" id="IPR050067">
    <property type="entry name" value="IPM_dehydratase_rel_enz"/>
</dbReference>
<dbReference type="InterPro" id="IPR033941">
    <property type="entry name" value="IPMI_cat"/>
</dbReference>
<dbReference type="InterPro" id="IPR011823">
    <property type="entry name" value="IsopropMal_deHydtase_lsu_bac"/>
</dbReference>
<dbReference type="NCBIfam" id="TIGR01343">
    <property type="entry name" value="hacA_fam"/>
    <property type="match status" value="1"/>
</dbReference>
<dbReference type="NCBIfam" id="TIGR02086">
    <property type="entry name" value="IPMI_arch"/>
    <property type="match status" value="1"/>
</dbReference>
<dbReference type="NCBIfam" id="TIGR02083">
    <property type="entry name" value="LEU2"/>
    <property type="match status" value="1"/>
</dbReference>
<dbReference type="NCBIfam" id="NF001614">
    <property type="entry name" value="PRK00402.1"/>
    <property type="match status" value="1"/>
</dbReference>
<dbReference type="PANTHER" id="PTHR43822:SF16">
    <property type="entry name" value="3-ISOPROPYLMALATE DEHYDRATASE LARGE SUBUNIT 2"/>
    <property type="match status" value="1"/>
</dbReference>
<dbReference type="PANTHER" id="PTHR43822">
    <property type="entry name" value="HOMOACONITASE, MITOCHONDRIAL-RELATED"/>
    <property type="match status" value="1"/>
</dbReference>
<dbReference type="Pfam" id="PF00330">
    <property type="entry name" value="Aconitase"/>
    <property type="match status" value="1"/>
</dbReference>
<dbReference type="PRINTS" id="PR00415">
    <property type="entry name" value="ACONITASE"/>
</dbReference>
<dbReference type="SUPFAM" id="SSF53732">
    <property type="entry name" value="Aconitase iron-sulfur domain"/>
    <property type="match status" value="1"/>
</dbReference>
<dbReference type="PROSITE" id="PS00450">
    <property type="entry name" value="ACONITASE_1"/>
    <property type="match status" value="1"/>
</dbReference>
<dbReference type="PROSITE" id="PS01244">
    <property type="entry name" value="ACONITASE_2"/>
    <property type="match status" value="1"/>
</dbReference>
<evidence type="ECO:0000255" key="1">
    <source>
        <dbReference type="HAMAP-Rule" id="MF_01027"/>
    </source>
</evidence>
<comment type="function">
    <text evidence="1">Catalyzes the isomerization between 2-isopropylmalate and 3-isopropylmalate, via the formation of 2-isopropylmaleate.</text>
</comment>
<comment type="catalytic activity">
    <reaction evidence="1">
        <text>(2R,3S)-3-isopropylmalate = (2S)-2-isopropylmalate</text>
        <dbReference type="Rhea" id="RHEA:32287"/>
        <dbReference type="ChEBI" id="CHEBI:1178"/>
        <dbReference type="ChEBI" id="CHEBI:35121"/>
        <dbReference type="EC" id="4.2.1.33"/>
    </reaction>
</comment>
<comment type="cofactor">
    <cofactor evidence="1">
        <name>[4Fe-4S] cluster</name>
        <dbReference type="ChEBI" id="CHEBI:49883"/>
    </cofactor>
    <text evidence="1">Binds 1 [4Fe-4S] cluster per subunit.</text>
</comment>
<comment type="pathway">
    <text evidence="1">Amino-acid biosynthesis; L-leucine biosynthesis; L-leucine from 3-methyl-2-oxobutanoate: step 2/4.</text>
</comment>
<comment type="subunit">
    <text evidence="1">Heterodimer of LeuC and LeuD.</text>
</comment>
<comment type="similarity">
    <text evidence="1">Belongs to the aconitase/IPM isomerase family. LeuC type 2 subfamily.</text>
</comment>
<proteinExistence type="inferred from homology"/>
<feature type="chain" id="PRO_1000149377" description="3-isopropylmalate dehydratase large subunit">
    <location>
        <begin position="1"/>
        <end position="429"/>
    </location>
</feature>
<feature type="binding site" evidence="1">
    <location>
        <position position="303"/>
    </location>
    <ligand>
        <name>[4Fe-4S] cluster</name>
        <dbReference type="ChEBI" id="CHEBI:49883"/>
    </ligand>
</feature>
<feature type="binding site" evidence="1">
    <location>
        <position position="363"/>
    </location>
    <ligand>
        <name>[4Fe-4S] cluster</name>
        <dbReference type="ChEBI" id="CHEBI:49883"/>
    </ligand>
</feature>
<feature type="binding site" evidence="1">
    <location>
        <position position="366"/>
    </location>
    <ligand>
        <name>[4Fe-4S] cluster</name>
        <dbReference type="ChEBI" id="CHEBI:49883"/>
    </ligand>
</feature>
<sequence length="429" mass="46866">MTKPMTMSQKILAYHAGKEYVEPGDLIFANVDLVLGNDVTTPVAIKEFEKIGIDRVFDKDKIAIVPDHFTPNKDIKSAQQCKMVREFAKKYEITNYFEVGEMGIEHALLPEKGLVVPGDLVIGADSHTCTYGALGAFSTGIGSTDMACAMATGKCWFKVPEAIKFILYGKKTGWTSGKDIILHIIGMIGVDGALYKSMEYTGEGLKSLSMDDRFTIANMAIEAGAKNGIFEVDEKTIEYVKQHSTKPYKIFKADEDAEYSQVFEIDISKIRPTVAFPHLPENTKTIDEITEKIYIDQVVIGSCTNGRIEDLRIAAKILKGRKVKKGLRCIIFPATQNIYKQALKEGFIEIFIDAGCVVSTPTCGPCLGGHMGILADGEKALATTNRNFVGRMGHPNSEVYLSSPAIAAASAVLGYIGSPEELGMKGDEE</sequence>
<organism>
    <name type="scientific">Caldicellulosiruptor bescii (strain ATCC BAA-1888 / DSM 6725 / KCTC 15123 / Z-1320)</name>
    <name type="common">Anaerocellum thermophilum</name>
    <dbReference type="NCBI Taxonomy" id="521460"/>
    <lineage>
        <taxon>Bacteria</taxon>
        <taxon>Bacillati</taxon>
        <taxon>Bacillota</taxon>
        <taxon>Bacillota incertae sedis</taxon>
        <taxon>Caldicellulosiruptorales</taxon>
        <taxon>Caldicellulosiruptoraceae</taxon>
        <taxon>Caldicellulosiruptor</taxon>
    </lineage>
</organism>
<protein>
    <recommendedName>
        <fullName evidence="1">3-isopropylmalate dehydratase large subunit</fullName>
        <ecNumber evidence="1">4.2.1.33</ecNumber>
    </recommendedName>
    <alternativeName>
        <fullName evidence="1">Alpha-IPM isomerase</fullName>
        <shortName evidence="1">IPMI</shortName>
    </alternativeName>
    <alternativeName>
        <fullName evidence="1">Isopropylmalate isomerase</fullName>
    </alternativeName>
</protein>
<keyword id="KW-0004">4Fe-4S</keyword>
<keyword id="KW-0028">Amino-acid biosynthesis</keyword>
<keyword id="KW-0100">Branched-chain amino acid biosynthesis</keyword>
<keyword id="KW-0408">Iron</keyword>
<keyword id="KW-0411">Iron-sulfur</keyword>
<keyword id="KW-0432">Leucine biosynthesis</keyword>
<keyword id="KW-0456">Lyase</keyword>
<keyword id="KW-0479">Metal-binding</keyword>
<name>LEUC_CALBD</name>